<protein>
    <recommendedName>
        <fullName evidence="6">RNA-binding protein Nova-2</fullName>
    </recommendedName>
    <alternativeName>
        <fullName>Astrocytic NOVA1-like RNA-binding protein</fullName>
    </alternativeName>
    <alternativeName>
        <fullName>Neuro-oncological ventral antigen 2</fullName>
    </alternativeName>
</protein>
<evidence type="ECO:0000250" key="1">
    <source>
        <dbReference type="UniProtKB" id="A0A1W2P872"/>
    </source>
</evidence>
<evidence type="ECO:0000255" key="2"/>
<evidence type="ECO:0000255" key="3">
    <source>
        <dbReference type="PROSITE-ProRule" id="PRU00117"/>
    </source>
</evidence>
<evidence type="ECO:0000269" key="4">
    <source>
    </source>
</evidence>
<evidence type="ECO:0000269" key="5">
    <source>
    </source>
</evidence>
<evidence type="ECO:0000305" key="6"/>
<evidence type="ECO:0000312" key="7">
    <source>
        <dbReference type="HGNC" id="HGNC:7887"/>
    </source>
</evidence>
<evidence type="ECO:0007744" key="8">
    <source>
    </source>
</evidence>
<evidence type="ECO:0007829" key="9">
    <source>
        <dbReference type="PDB" id="1DTJ"/>
    </source>
</evidence>
<evidence type="ECO:0007829" key="10">
    <source>
        <dbReference type="PDB" id="1EC6"/>
    </source>
</evidence>
<name>NOVA2_HUMAN</name>
<proteinExistence type="evidence at protein level"/>
<gene>
    <name evidence="7" type="primary">NOVA2</name>
    <name type="synonym">ANOVA</name>
    <name type="synonym">NOVA3</name>
</gene>
<accession>Q9UNW9</accession>
<accession>O43267</accession>
<accession>Q9UEA1</accession>
<keyword id="KW-0002">3D-structure</keyword>
<keyword id="KW-1268">Autism spectrum disorder</keyword>
<keyword id="KW-0991">Intellectual disability</keyword>
<keyword id="KW-1017">Isopeptide bond</keyword>
<keyword id="KW-0507">mRNA processing</keyword>
<keyword id="KW-0508">mRNA splicing</keyword>
<keyword id="KW-0524">Neurogenesis</keyword>
<keyword id="KW-0539">Nucleus</keyword>
<keyword id="KW-1267">Proteomics identification</keyword>
<keyword id="KW-1185">Reference proteome</keyword>
<keyword id="KW-0677">Repeat</keyword>
<keyword id="KW-0694">RNA-binding</keyword>
<keyword id="KW-0832">Ubl conjugation</keyword>
<dbReference type="EMBL" id="U70477">
    <property type="protein sequence ID" value="AAB88661.1"/>
    <property type="status" value="ALT_INIT"/>
    <property type="molecule type" value="mRNA"/>
</dbReference>
<dbReference type="EMBL" id="AF083898">
    <property type="protein sequence ID" value="AAC72355.1"/>
    <property type="molecule type" value="mRNA"/>
</dbReference>
<dbReference type="EMBL" id="AC006540">
    <property type="protein sequence ID" value="AAD13116.1"/>
    <property type="molecule type" value="Genomic_DNA"/>
</dbReference>
<dbReference type="CCDS" id="CCDS12679.1"/>
<dbReference type="RefSeq" id="NP_002507.1">
    <property type="nucleotide sequence ID" value="NM_002516.4"/>
</dbReference>
<dbReference type="PDB" id="1DTJ">
    <property type="method" value="X-ray"/>
    <property type="resolution" value="2.00 A"/>
    <property type="chains" value="A/B/C/D=406-480"/>
</dbReference>
<dbReference type="PDB" id="1EC6">
    <property type="method" value="X-ray"/>
    <property type="resolution" value="2.40 A"/>
    <property type="chains" value="A/B=406-491"/>
</dbReference>
<dbReference type="PDBsum" id="1DTJ"/>
<dbReference type="PDBsum" id="1EC6"/>
<dbReference type="SMR" id="Q9UNW9"/>
<dbReference type="BioGRID" id="110920">
    <property type="interactions" value="14"/>
</dbReference>
<dbReference type="FunCoup" id="Q9UNW9">
    <property type="interactions" value="870"/>
</dbReference>
<dbReference type="IntAct" id="Q9UNW9">
    <property type="interactions" value="5"/>
</dbReference>
<dbReference type="MINT" id="Q9UNW9"/>
<dbReference type="STRING" id="9606.ENSP00000263257"/>
<dbReference type="GlyGen" id="Q9UNW9">
    <property type="glycosylation" value="1 site, 1 O-linked glycan (1 site)"/>
</dbReference>
<dbReference type="iPTMnet" id="Q9UNW9"/>
<dbReference type="PhosphoSitePlus" id="Q9UNW9"/>
<dbReference type="BioMuta" id="NOVA2"/>
<dbReference type="DMDM" id="33516944"/>
<dbReference type="jPOST" id="Q9UNW9"/>
<dbReference type="MassIVE" id="Q9UNW9"/>
<dbReference type="PaxDb" id="9606-ENSP00000263257"/>
<dbReference type="PeptideAtlas" id="Q9UNW9"/>
<dbReference type="ProteomicsDB" id="85338"/>
<dbReference type="Pumba" id="Q9UNW9"/>
<dbReference type="Antibodypedia" id="18063">
    <property type="antibodies" value="163 antibodies from 25 providers"/>
</dbReference>
<dbReference type="DNASU" id="4858"/>
<dbReference type="Ensembl" id="ENST00000263257.6">
    <property type="protein sequence ID" value="ENSP00000263257.4"/>
    <property type="gene ID" value="ENSG00000104967.8"/>
</dbReference>
<dbReference type="GeneID" id="4858"/>
<dbReference type="KEGG" id="hsa:4858"/>
<dbReference type="MANE-Select" id="ENST00000263257.6">
    <property type="protein sequence ID" value="ENSP00000263257.4"/>
    <property type="RefSeq nucleotide sequence ID" value="NM_002516.4"/>
    <property type="RefSeq protein sequence ID" value="NP_002507.1"/>
</dbReference>
<dbReference type="UCSC" id="uc002pdv.3">
    <property type="organism name" value="human"/>
</dbReference>
<dbReference type="AGR" id="HGNC:7887"/>
<dbReference type="CTD" id="4858"/>
<dbReference type="DisGeNET" id="4858"/>
<dbReference type="GeneCards" id="NOVA2"/>
<dbReference type="HGNC" id="HGNC:7887">
    <property type="gene designation" value="NOVA2"/>
</dbReference>
<dbReference type="HPA" id="ENSG00000104967">
    <property type="expression patterns" value="Tissue enhanced (brain)"/>
</dbReference>
<dbReference type="MalaCards" id="NOVA2"/>
<dbReference type="MIM" id="601991">
    <property type="type" value="gene"/>
</dbReference>
<dbReference type="MIM" id="618859">
    <property type="type" value="phenotype"/>
</dbReference>
<dbReference type="neXtProt" id="NX_Q9UNW9"/>
<dbReference type="OpenTargets" id="ENSG00000104967"/>
<dbReference type="Orphanet" id="528084">
    <property type="disease" value="Non-specific syndromic intellectual disability"/>
</dbReference>
<dbReference type="PharmGKB" id="PA31689"/>
<dbReference type="VEuPathDB" id="HostDB:ENSG00000104967"/>
<dbReference type="eggNOG" id="KOG2191">
    <property type="taxonomic scope" value="Eukaryota"/>
</dbReference>
<dbReference type="GeneTree" id="ENSGT00940000161740"/>
<dbReference type="HOGENOM" id="CLU_022670_1_1_1"/>
<dbReference type="InParanoid" id="Q9UNW9"/>
<dbReference type="OMA" id="CEGEYFL"/>
<dbReference type="OrthoDB" id="441329at2759"/>
<dbReference type="PAN-GO" id="Q9UNW9">
    <property type="GO annotations" value="5 GO annotations based on evolutionary models"/>
</dbReference>
<dbReference type="PhylomeDB" id="Q9UNW9"/>
<dbReference type="TreeFam" id="TF316981"/>
<dbReference type="PathwayCommons" id="Q9UNW9"/>
<dbReference type="SignaLink" id="Q9UNW9"/>
<dbReference type="SIGNOR" id="Q9UNW9"/>
<dbReference type="BioGRID-ORCS" id="4858">
    <property type="hits" value="10 hits in 1148 CRISPR screens"/>
</dbReference>
<dbReference type="CD-CODE" id="DEE660B4">
    <property type="entry name" value="Stress granule"/>
</dbReference>
<dbReference type="EvolutionaryTrace" id="Q9UNW9"/>
<dbReference type="GenomeRNAi" id="4858"/>
<dbReference type="Pharos" id="Q9UNW9">
    <property type="development level" value="Tbio"/>
</dbReference>
<dbReference type="PRO" id="PR:Q9UNW9"/>
<dbReference type="Proteomes" id="UP000005640">
    <property type="component" value="Chromosome 19"/>
</dbReference>
<dbReference type="RNAct" id="Q9UNW9">
    <property type="molecule type" value="protein"/>
</dbReference>
<dbReference type="Bgee" id="ENSG00000104967">
    <property type="expression patterns" value="Expressed in cortical plate and 167 other cell types or tissues"/>
</dbReference>
<dbReference type="ExpressionAtlas" id="Q9UNW9">
    <property type="expression patterns" value="baseline and differential"/>
</dbReference>
<dbReference type="GO" id="GO:0005737">
    <property type="term" value="C:cytoplasm"/>
    <property type="evidence" value="ECO:0000318"/>
    <property type="project" value="GO_Central"/>
</dbReference>
<dbReference type="GO" id="GO:0005634">
    <property type="term" value="C:nucleus"/>
    <property type="evidence" value="ECO:0000318"/>
    <property type="project" value="GO_Central"/>
</dbReference>
<dbReference type="GO" id="GO:0003729">
    <property type="term" value="F:mRNA binding"/>
    <property type="evidence" value="ECO:0000250"/>
    <property type="project" value="UniProtKB"/>
</dbReference>
<dbReference type="GO" id="GO:0003723">
    <property type="term" value="F:RNA binding"/>
    <property type="evidence" value="ECO:0000314"/>
    <property type="project" value="UniProtKB"/>
</dbReference>
<dbReference type="GO" id="GO:1990825">
    <property type="term" value="F:sequence-specific mRNA binding"/>
    <property type="evidence" value="ECO:0000314"/>
    <property type="project" value="UniProtKB"/>
</dbReference>
<dbReference type="GO" id="GO:0021954">
    <property type="term" value="P:central nervous system neuron development"/>
    <property type="evidence" value="ECO:0000250"/>
    <property type="project" value="UniProtKB"/>
</dbReference>
<dbReference type="GO" id="GO:0000398">
    <property type="term" value="P:mRNA splicing, via spliceosome"/>
    <property type="evidence" value="ECO:0000318"/>
    <property type="project" value="GO_Central"/>
</dbReference>
<dbReference type="GO" id="GO:0120163">
    <property type="term" value="P:negative regulation of cold-induced thermogenesis"/>
    <property type="evidence" value="ECO:0000250"/>
    <property type="project" value="YuBioLab"/>
</dbReference>
<dbReference type="GO" id="GO:0030182">
    <property type="term" value="P:neuron differentiation"/>
    <property type="evidence" value="ECO:0000315"/>
    <property type="project" value="UniProtKB"/>
</dbReference>
<dbReference type="GO" id="GO:0000381">
    <property type="term" value="P:regulation of alternative mRNA splicing, via spliceosome"/>
    <property type="evidence" value="ECO:0000315"/>
    <property type="project" value="UniProtKB"/>
</dbReference>
<dbReference type="GO" id="GO:1902667">
    <property type="term" value="P:regulation of axon guidance"/>
    <property type="evidence" value="ECO:0000250"/>
    <property type="project" value="UniProtKB"/>
</dbReference>
<dbReference type="GO" id="GO:0051252">
    <property type="term" value="P:regulation of RNA metabolic process"/>
    <property type="evidence" value="ECO:0000315"/>
    <property type="project" value="UniProtKB"/>
</dbReference>
<dbReference type="CDD" id="cd22435">
    <property type="entry name" value="KH-I_NOVA_rpt1"/>
    <property type="match status" value="1"/>
</dbReference>
<dbReference type="CDD" id="cd22436">
    <property type="entry name" value="KH-I_NOVA_rpt2"/>
    <property type="match status" value="1"/>
</dbReference>
<dbReference type="CDD" id="cd09031">
    <property type="entry name" value="KH-I_NOVA_rpt3"/>
    <property type="match status" value="1"/>
</dbReference>
<dbReference type="FunFam" id="3.30.1370.10:FF:000019">
    <property type="entry name" value="RNA-binding protein Nova-1 isoform 1"/>
    <property type="match status" value="1"/>
</dbReference>
<dbReference type="FunFam" id="3.30.1370.10:FF:000020">
    <property type="entry name" value="RNA-binding protein Nova-1 isoform 1"/>
    <property type="match status" value="1"/>
</dbReference>
<dbReference type="FunFam" id="3.30.1370.10:FF:000022">
    <property type="entry name" value="RNA-binding protein Nova-1 isoform 1"/>
    <property type="match status" value="1"/>
</dbReference>
<dbReference type="Gene3D" id="3.30.1370.10">
    <property type="entry name" value="K Homology domain, type 1"/>
    <property type="match status" value="3"/>
</dbReference>
<dbReference type="InterPro" id="IPR047275">
    <property type="entry name" value="KH-I_NOVA_rpt1"/>
</dbReference>
<dbReference type="InterPro" id="IPR047276">
    <property type="entry name" value="KH-I_NOVA_rpt2"/>
</dbReference>
<dbReference type="InterPro" id="IPR047274">
    <property type="entry name" value="KH-I_NOVA_rpt3"/>
</dbReference>
<dbReference type="InterPro" id="IPR004087">
    <property type="entry name" value="KH_dom"/>
</dbReference>
<dbReference type="InterPro" id="IPR004088">
    <property type="entry name" value="KH_dom_type_1"/>
</dbReference>
<dbReference type="InterPro" id="IPR036612">
    <property type="entry name" value="KH_dom_type_1_sf"/>
</dbReference>
<dbReference type="PANTHER" id="PTHR10288">
    <property type="entry name" value="KH DOMAIN CONTAINING RNA BINDING PROTEIN"/>
    <property type="match status" value="1"/>
</dbReference>
<dbReference type="Pfam" id="PF00013">
    <property type="entry name" value="KH_1"/>
    <property type="match status" value="3"/>
</dbReference>
<dbReference type="SMART" id="SM00322">
    <property type="entry name" value="KH"/>
    <property type="match status" value="3"/>
</dbReference>
<dbReference type="SUPFAM" id="SSF54791">
    <property type="entry name" value="Eukaryotic type KH-domain (KH-domain type I)"/>
    <property type="match status" value="3"/>
</dbReference>
<dbReference type="PROSITE" id="PS50084">
    <property type="entry name" value="KH_TYPE_1"/>
    <property type="match status" value="3"/>
</dbReference>
<reference key="1">
    <citation type="journal article" date="1997" name="Neurogenetics">
        <title>ANOVA, a putative astrocytic RNA binding protein gene that maps to chromosome 19q13.3.</title>
        <authorList>
            <person name="Ueki K."/>
            <person name="Ramaswamy S."/>
            <person name="Billings S.J."/>
            <person name="Mohrenweiser H.W."/>
            <person name="Louis D.N."/>
        </authorList>
    </citation>
    <scope>NUCLEOTIDE SEQUENCE [MRNA]</scope>
    <source>
        <tissue>Brain</tissue>
    </source>
</reference>
<reference key="2">
    <citation type="journal article" date="1998" name="Proc. Natl. Acad. Sci. U.S.A.">
        <title>The neuronal RNA-binding protein Nova-2 is implicated as the autoantigen targeted in POMA patients with dementia.</title>
        <authorList>
            <person name="Yang Y.Y."/>
            <person name="Yin G.L."/>
            <person name="Darnell R.B."/>
        </authorList>
    </citation>
    <scope>NUCLEOTIDE SEQUENCE [MRNA]</scope>
</reference>
<reference key="3">
    <citation type="journal article" date="2004" name="Nature">
        <title>The DNA sequence and biology of human chromosome 19.</title>
        <authorList>
            <person name="Grimwood J."/>
            <person name="Gordon L.A."/>
            <person name="Olsen A.S."/>
            <person name="Terry A."/>
            <person name="Schmutz J."/>
            <person name="Lamerdin J.E."/>
            <person name="Hellsten U."/>
            <person name="Goodstein D."/>
            <person name="Couronne O."/>
            <person name="Tran-Gyamfi M."/>
            <person name="Aerts A."/>
            <person name="Altherr M."/>
            <person name="Ashworth L."/>
            <person name="Bajorek E."/>
            <person name="Black S."/>
            <person name="Branscomb E."/>
            <person name="Caenepeel S."/>
            <person name="Carrano A.V."/>
            <person name="Caoile C."/>
            <person name="Chan Y.M."/>
            <person name="Christensen M."/>
            <person name="Cleland C.A."/>
            <person name="Copeland A."/>
            <person name="Dalin E."/>
            <person name="Dehal P."/>
            <person name="Denys M."/>
            <person name="Detter J.C."/>
            <person name="Escobar J."/>
            <person name="Flowers D."/>
            <person name="Fotopulos D."/>
            <person name="Garcia C."/>
            <person name="Georgescu A.M."/>
            <person name="Glavina T."/>
            <person name="Gomez M."/>
            <person name="Gonzales E."/>
            <person name="Groza M."/>
            <person name="Hammon N."/>
            <person name="Hawkins T."/>
            <person name="Haydu L."/>
            <person name="Ho I."/>
            <person name="Huang W."/>
            <person name="Israni S."/>
            <person name="Jett J."/>
            <person name="Kadner K."/>
            <person name="Kimball H."/>
            <person name="Kobayashi A."/>
            <person name="Larionov V."/>
            <person name="Leem S.-H."/>
            <person name="Lopez F."/>
            <person name="Lou Y."/>
            <person name="Lowry S."/>
            <person name="Malfatti S."/>
            <person name="Martinez D."/>
            <person name="McCready P.M."/>
            <person name="Medina C."/>
            <person name="Morgan J."/>
            <person name="Nelson K."/>
            <person name="Nolan M."/>
            <person name="Ovcharenko I."/>
            <person name="Pitluck S."/>
            <person name="Pollard M."/>
            <person name="Popkie A.P."/>
            <person name="Predki P."/>
            <person name="Quan G."/>
            <person name="Ramirez L."/>
            <person name="Rash S."/>
            <person name="Retterer J."/>
            <person name="Rodriguez A."/>
            <person name="Rogers S."/>
            <person name="Salamov A."/>
            <person name="Salazar A."/>
            <person name="She X."/>
            <person name="Smith D."/>
            <person name="Slezak T."/>
            <person name="Solovyev V."/>
            <person name="Thayer N."/>
            <person name="Tice H."/>
            <person name="Tsai M."/>
            <person name="Ustaszewska A."/>
            <person name="Vo N."/>
            <person name="Wagner M."/>
            <person name="Wheeler J."/>
            <person name="Wu K."/>
            <person name="Xie G."/>
            <person name="Yang J."/>
            <person name="Dubchak I."/>
            <person name="Furey T.S."/>
            <person name="DeJong P."/>
            <person name="Dickson M."/>
            <person name="Gordon D."/>
            <person name="Eichler E.E."/>
            <person name="Pennacchio L.A."/>
            <person name="Richardson P."/>
            <person name="Stubbs L."/>
            <person name="Rokhsar D.S."/>
            <person name="Myers R.M."/>
            <person name="Rubin E.M."/>
            <person name="Lucas S.M."/>
        </authorList>
    </citation>
    <scope>NUCLEOTIDE SEQUENCE [LARGE SCALE GENOMIC DNA]</scope>
</reference>
<reference key="4">
    <citation type="journal article" date="2000" name="Proc. Natl. Acad. Sci. U.S.A.">
        <title>The tetranucleotide UCAY directs the specific recognition of RNA by the Nova K-homology 3 domain.</title>
        <authorList>
            <person name="Jensen K.B."/>
            <person name="Musunuru K."/>
            <person name="Lewis H.A."/>
            <person name="Burley S.K."/>
            <person name="Darnell R.B."/>
        </authorList>
    </citation>
    <scope>FUNCTION</scope>
</reference>
<reference key="5">
    <citation type="journal article" date="2017" name="Nat. Struct. Mol. Biol.">
        <title>Site-specific mapping of the human SUMO proteome reveals co-modification with phosphorylation.</title>
        <authorList>
            <person name="Hendriks I.A."/>
            <person name="Lyon D."/>
            <person name="Young C."/>
            <person name="Jensen L.J."/>
            <person name="Vertegaal A.C."/>
            <person name="Nielsen M.L."/>
        </authorList>
    </citation>
    <scope>SUMOYLATION [LARGE SCALE ANALYSIS] AT LYS-112</scope>
    <scope>IDENTIFICATION BY MASS SPECTROMETRY [LARGE SCALE ANALYSIS]</scope>
</reference>
<reference key="6">
    <citation type="journal article" date="1999" name="Structure">
        <title>Crystal structures of Nova-1 and Nova-2 K-homology RNA-binding domains.</title>
        <authorList>
            <person name="Lewis H.A."/>
            <person name="Chen H."/>
            <person name="Edo C."/>
            <person name="Buckanovich R.J."/>
            <person name="Yang Y.Y.-L."/>
            <person name="Musunuru K."/>
            <person name="Zhong R."/>
            <person name="Darnell R.B."/>
            <person name="Burley S.K."/>
        </authorList>
    </citation>
    <scope>X-RAY CRYSTALLOGRAPHY (2.0 ANGSTROMS) OF 405-480</scope>
</reference>
<reference key="7">
    <citation type="journal article" date="2000" name="Cell">
        <title>Sequence-specific RNA binding by a Nova KH domain: implications for paraneoplastic disease and the fragile X syndrome.</title>
        <authorList>
            <person name="Lewis H.A."/>
            <person name="Musunuru K."/>
            <person name="Jensen K.B."/>
            <person name="Edo C."/>
            <person name="Chen H."/>
            <person name="Darnell R.B."/>
            <person name="Burley S.K."/>
        </authorList>
    </citation>
    <scope>X-RAY CRYSTALLOGRAPHY (2.4 ANGSTROMS) OF 405-491 IN COMPLEX WITH RNA</scope>
</reference>
<reference key="8">
    <citation type="journal article" date="2020" name="Am. J. Hum. Genet.">
        <title>De Novo Frameshift Variants in the Neuronal Splicing Factor NOVA2 Result in a Common C-Terminal Extension and Cause a Severe Form of Neurodevelopmental Disorder.</title>
        <authorList>
            <person name="Mattioli F."/>
            <person name="Hayot G."/>
            <person name="Drouot N."/>
            <person name="Isidor B."/>
            <person name="Courraud J."/>
            <person name="Hinckelmann M.V."/>
            <person name="Mau-Them F.T."/>
            <person name="Sellier C."/>
            <person name="Goldman A."/>
            <person name="Telegrafi A."/>
            <person name="Boughton A."/>
            <person name="Gamble C."/>
            <person name="Moutton S."/>
            <person name="Quartier A."/>
            <person name="Jean N."/>
            <person name="Van Ness P."/>
            <person name="Grotto S."/>
            <person name="Nambot S."/>
            <person name="Douglas G."/>
            <person name="Si Y.C."/>
            <person name="Chelly J."/>
            <person name="Shad Z."/>
            <person name="Kaplan E."/>
            <person name="Dineen R."/>
            <person name="Golzio C."/>
            <person name="Charlet-Berguerand N."/>
            <person name="Mandel J.L."/>
            <person name="Piton A."/>
        </authorList>
    </citation>
    <scope>INVOLVEMENT IN NEDASB</scope>
    <scope>FUNCTION</scope>
    <scope>MUTAGENESIS OF 231-TYR--GLY-492</scope>
</reference>
<organism>
    <name type="scientific">Homo sapiens</name>
    <name type="common">Human</name>
    <dbReference type="NCBI Taxonomy" id="9606"/>
    <lineage>
        <taxon>Eukaryota</taxon>
        <taxon>Metazoa</taxon>
        <taxon>Chordata</taxon>
        <taxon>Craniata</taxon>
        <taxon>Vertebrata</taxon>
        <taxon>Euteleostomi</taxon>
        <taxon>Mammalia</taxon>
        <taxon>Eutheria</taxon>
        <taxon>Euarchontoglires</taxon>
        <taxon>Primates</taxon>
        <taxon>Haplorrhini</taxon>
        <taxon>Catarrhini</taxon>
        <taxon>Hominidae</taxon>
        <taxon>Homo</taxon>
    </lineage>
</organism>
<feature type="chain" id="PRO_0000050119" description="RNA-binding protein Nova-2">
    <location>
        <begin position="1"/>
        <end position="492"/>
    </location>
</feature>
<feature type="domain" description="KH 1" evidence="3">
    <location>
        <begin position="32"/>
        <end position="99"/>
    </location>
</feature>
<feature type="domain" description="KH 2" evidence="3">
    <location>
        <begin position="130"/>
        <end position="196"/>
    </location>
</feature>
<feature type="domain" description="KH 3" evidence="3">
    <location>
        <begin position="406"/>
        <end position="473"/>
    </location>
</feature>
<feature type="short sequence motif" description="Bipartite nuclear localization signal" evidence="2">
    <location>
        <begin position="10"/>
        <end position="26"/>
    </location>
</feature>
<feature type="cross-link" description="Glycyl lysine isopeptide (Lys-Gly) (interchain with G-Cter in SUMO2)" evidence="8">
    <location>
        <position position="112"/>
    </location>
</feature>
<feature type="mutagenesis site" description="Loss of alternative splicing regulation." evidence="5">
    <location>
        <begin position="231"/>
        <end position="492"/>
    </location>
</feature>
<feature type="sequence conflict" description="In Ref. 1; AAB88661." evidence="6" ref="1">
    <original>A</original>
    <variation>R</variation>
    <location>
        <position position="247"/>
    </location>
</feature>
<feature type="sequence conflict" description="In Ref. 1; AAB88661." evidence="6" ref="1">
    <original>PAA</original>
    <variation>TAT</variation>
    <location>
        <begin position="265"/>
        <end position="267"/>
    </location>
</feature>
<feature type="strand" evidence="9">
    <location>
        <begin position="407"/>
        <end position="414"/>
    </location>
</feature>
<feature type="turn" evidence="9">
    <location>
        <begin position="415"/>
        <end position="417"/>
    </location>
</feature>
<feature type="helix" evidence="9">
    <location>
        <begin position="418"/>
        <end position="422"/>
    </location>
</feature>
<feature type="helix" evidence="10">
    <location>
        <begin position="424"/>
        <end position="426"/>
    </location>
</feature>
<feature type="helix" evidence="9">
    <location>
        <begin position="427"/>
        <end position="436"/>
    </location>
</feature>
<feature type="strand" evidence="9">
    <location>
        <begin position="439"/>
        <end position="442"/>
    </location>
</feature>
<feature type="strand" evidence="9">
    <location>
        <begin position="454"/>
        <end position="462"/>
    </location>
</feature>
<feature type="helix" evidence="9">
    <location>
        <begin position="463"/>
        <end position="476"/>
    </location>
</feature>
<comment type="function">
    <text evidence="1 4 5">Functions to regulate alternative splicing in neurons by binding pre-mRNA in a sequence-specific manner to activate exon inclusion or exclusion (PubMed:32197073). It binds specifically to the sequences 5'-YCAY-3' and regulates splicing in only a subset of regulated exons (PubMed:10811881). Binding to an exonic 5'-YCAY-3' cluster changes the protein complexes assembled on pre-mRNA, blocking U1 snRNP binding and exon inclusion, whereas binding to an intronic 5'-YCAY-3' cluster enhances spliceosome assembly and exon inclusion. With NOVA1, they perform unique biological functions in different brain areas and cell types. Uniquely regulates alternative splicing events of a series of axon guidance related genes during cortical development, being essential for central nervous system development by regulating neural networks wiring. Regulates differentially alternative splicing on the same transcripts expressed in different neurons. This includes functional differences in transcripts expressed in cortical and cerebellar excitatory versus inhibitory neurons where is required for, respectively, development of laminar structure and motor coordination and synapse formation. Also the regulation the regulation of intron retention can sequester the trans-acting splicing factor PTBP2, acting as a variable cis-acting scaffolding platform for PTBP2 across various natural conditions (By similarity).</text>
</comment>
<comment type="subunit">
    <text evidence="1">Interacts with PTBP2; the interaction is direct.</text>
</comment>
<comment type="subcellular location">
    <subcellularLocation>
        <location evidence="1">Nucleus</location>
    </subcellularLocation>
</comment>
<comment type="tissue specificity">
    <text>Brain. Expression restricted to astrocytes.</text>
</comment>
<comment type="domain">
    <text evidence="4">The third KH domain (KH3) recognizes specifically 5'-YCAY-3'.</text>
</comment>
<comment type="disease" evidence="5">
    <disease id="DI-05826">
        <name>Neurodevelopmental disorder with or without autistic features and/or structural brain abnormalities</name>
        <acronym>NEDASB</acronym>
        <description>An early-onset neurodevelopmental disorder characterized by intellectual disability, motor and speech delay, autistic features, hypotonia, feeding difficulties, spasticity or ataxic gait, and structural brain abnormalities including cerebral atrophy, cerebellar atrophy, and/or thin corpus callosum.</description>
        <dbReference type="MIM" id="618859"/>
    </disease>
    <text>The disease is caused by variants affecting the gene represented in this entry.</text>
</comment>
<comment type="sequence caution" evidence="6">
    <conflict type="erroneous initiation">
        <sequence resource="EMBL-CDS" id="AAB88661"/>
    </conflict>
    <text>Extended N-terminus.</text>
</comment>
<sequence>MEPEAPDSRKRPLETPPEVVCTKRSNTGEEGEYFLKVLIPSYAAGSIIGKGGQTIVQLQKETGATIKLSKSKDFYPGTTERVCLVQGTAEALNAVHSFIAEKVREIPQAMTKPEVVNILQPQTTMNPDRAKQAKLIVPNSTAGLIIGKGGATVKAVMEQSGAWVQLSQKPEGINLQERVVTVSGEPEQVHKAVSAIVQKVQEDPQSSSCLNISYANVAGPVANSNPTGSPYASPADVLPAAAAASAAAASGLLGPAGLAGVGAFPAALPAFSGTDLLAISTALNTLASYGYNTNSLGLGLNSAAASGVLAAVAAGANPAAAAAANLLASYAGEAGAGPAGGAAPPPPPPPGALGSFALAAAANGYLGAGAGGGAGGGGGPLVAAAAAAGAAGGFLTAEKLAAESAKELVEIAVPENLVGAILGKGGKTLVEYQELTGARIQISKKGEFLPGTRNRRVTITGSPAATQAAQYLISQRVTYEQGVRASNPQKVG</sequence>